<feature type="chain" id="PRO_0000276233" description="Photosystem II reaction center protein M">
    <location>
        <begin position="1"/>
        <end position="34"/>
    </location>
</feature>
<feature type="transmembrane region" description="Helical" evidence="1">
    <location>
        <begin position="5"/>
        <end position="25"/>
    </location>
</feature>
<keyword id="KW-0150">Chloroplast</keyword>
<keyword id="KW-0472">Membrane</keyword>
<keyword id="KW-0602">Photosynthesis</keyword>
<keyword id="KW-0604">Photosystem II</keyword>
<keyword id="KW-0934">Plastid</keyword>
<keyword id="KW-0674">Reaction center</keyword>
<keyword id="KW-0793">Thylakoid</keyword>
<keyword id="KW-0812">Transmembrane</keyword>
<keyword id="KW-1133">Transmembrane helix</keyword>
<reference key="1">
    <citation type="journal article" date="2006" name="BMC Plant Biol.">
        <title>The complete chloroplast genome sequence of Citrus sinensis (L.) Osbeck var 'Ridge Pineapple': organization and phylogenetic relationships to other angiosperms.</title>
        <authorList>
            <person name="Bausher M.G."/>
            <person name="Singh N.D."/>
            <person name="Lee S.-B."/>
            <person name="Jansen R.K."/>
            <person name="Daniell H."/>
        </authorList>
    </citation>
    <scope>NUCLEOTIDE SEQUENCE [LARGE SCALE GENOMIC DNA]</scope>
    <source>
        <strain>cv. Osbeck var. Ridge Pineapple</strain>
    </source>
</reference>
<sequence>MEVNILAFIATTLFVLVPTAFLLIIYVKTVSQSD</sequence>
<evidence type="ECO:0000255" key="1">
    <source>
        <dbReference type="HAMAP-Rule" id="MF_00438"/>
    </source>
</evidence>
<dbReference type="EMBL" id="DQ864733">
    <property type="protein sequence ID" value="ABI49014.1"/>
    <property type="molecule type" value="Genomic_DNA"/>
</dbReference>
<dbReference type="RefSeq" id="YP_740469.1">
    <property type="nucleotide sequence ID" value="NC_008334.1"/>
</dbReference>
<dbReference type="SMR" id="Q09MI4"/>
<dbReference type="GeneID" id="4271238"/>
<dbReference type="KEGG" id="cit:4271238"/>
<dbReference type="OrthoDB" id="173943at71240"/>
<dbReference type="GO" id="GO:0009535">
    <property type="term" value="C:chloroplast thylakoid membrane"/>
    <property type="evidence" value="ECO:0007669"/>
    <property type="project" value="UniProtKB-SubCell"/>
</dbReference>
<dbReference type="GO" id="GO:0009523">
    <property type="term" value="C:photosystem II"/>
    <property type="evidence" value="ECO:0007669"/>
    <property type="project" value="UniProtKB-KW"/>
</dbReference>
<dbReference type="GO" id="GO:0019684">
    <property type="term" value="P:photosynthesis, light reaction"/>
    <property type="evidence" value="ECO:0007669"/>
    <property type="project" value="InterPro"/>
</dbReference>
<dbReference type="HAMAP" id="MF_00438">
    <property type="entry name" value="PSII_PsbM"/>
    <property type="match status" value="1"/>
</dbReference>
<dbReference type="InterPro" id="IPR007826">
    <property type="entry name" value="PSII_PsbM"/>
</dbReference>
<dbReference type="InterPro" id="IPR037269">
    <property type="entry name" value="PSII_PsbM_sf"/>
</dbReference>
<dbReference type="NCBIfam" id="TIGR03038">
    <property type="entry name" value="PS_II_psbM"/>
    <property type="match status" value="1"/>
</dbReference>
<dbReference type="PANTHER" id="PTHR35774">
    <property type="entry name" value="PHOTOSYSTEM II REACTION CENTER PROTEIN M"/>
    <property type="match status" value="1"/>
</dbReference>
<dbReference type="PANTHER" id="PTHR35774:SF1">
    <property type="entry name" value="PHOTOSYSTEM II REACTION CENTER PROTEIN M"/>
    <property type="match status" value="1"/>
</dbReference>
<dbReference type="Pfam" id="PF05151">
    <property type="entry name" value="PsbM"/>
    <property type="match status" value="1"/>
</dbReference>
<dbReference type="SUPFAM" id="SSF161033">
    <property type="entry name" value="Photosystem II reaction center protein M, PsbM"/>
    <property type="match status" value="1"/>
</dbReference>
<comment type="function">
    <text evidence="1">One of the components of the core complex of photosystem II (PSII). PSII is a light-driven water:plastoquinone oxidoreductase that uses light energy to abstract electrons from H(2)O, generating O(2) and a proton gradient subsequently used for ATP formation. It consists of a core antenna complex that captures photons, and an electron transfer chain that converts photonic excitation into a charge separation. This subunit is found at the monomer-monomer interface.</text>
</comment>
<comment type="subunit">
    <text evidence="1">PSII is composed of 1 copy each of membrane proteins PsbA, PsbB, PsbC, PsbD, PsbE, PsbF, PsbH, PsbI, PsbJ, PsbK, PsbL, PsbM, PsbT, PsbX, PsbY, PsbZ, Psb30/Ycf12, at least 3 peripheral proteins of the oxygen-evolving complex and a large number of cofactors. It forms dimeric complexes.</text>
</comment>
<comment type="subcellular location">
    <subcellularLocation>
        <location evidence="1">Plastid</location>
        <location evidence="1">Chloroplast thylakoid membrane</location>
        <topology evidence="1">Single-pass membrane protein</topology>
    </subcellularLocation>
</comment>
<comment type="similarity">
    <text evidence="1">Belongs to the PsbM family.</text>
</comment>
<gene>
    <name evidence="1" type="primary">psbM</name>
</gene>
<protein>
    <recommendedName>
        <fullName evidence="1">Photosystem II reaction center protein M</fullName>
        <shortName evidence="1">PSII-M</shortName>
    </recommendedName>
</protein>
<geneLocation type="chloroplast"/>
<name>PSBM_CITSI</name>
<proteinExistence type="inferred from homology"/>
<accession>Q09MI4</accession>
<organism>
    <name type="scientific">Citrus sinensis</name>
    <name type="common">Sweet orange</name>
    <name type="synonym">Citrus aurantium var. sinensis</name>
    <dbReference type="NCBI Taxonomy" id="2711"/>
    <lineage>
        <taxon>Eukaryota</taxon>
        <taxon>Viridiplantae</taxon>
        <taxon>Streptophyta</taxon>
        <taxon>Embryophyta</taxon>
        <taxon>Tracheophyta</taxon>
        <taxon>Spermatophyta</taxon>
        <taxon>Magnoliopsida</taxon>
        <taxon>eudicotyledons</taxon>
        <taxon>Gunneridae</taxon>
        <taxon>Pentapetalae</taxon>
        <taxon>rosids</taxon>
        <taxon>malvids</taxon>
        <taxon>Sapindales</taxon>
        <taxon>Rutaceae</taxon>
        <taxon>Aurantioideae</taxon>
        <taxon>Citrus</taxon>
    </lineage>
</organism>